<reference key="1">
    <citation type="journal article" date="2008" name="Genome Res.">
        <title>Insights from the complete genome sequence of Mycobacterium marinum on the evolution of Mycobacterium tuberculosis.</title>
        <authorList>
            <person name="Stinear T.P."/>
            <person name="Seemann T."/>
            <person name="Harrison P.F."/>
            <person name="Jenkin G.A."/>
            <person name="Davies J.K."/>
            <person name="Johnson P.D."/>
            <person name="Abdellah Z."/>
            <person name="Arrowsmith C."/>
            <person name="Chillingworth T."/>
            <person name="Churcher C."/>
            <person name="Clarke K."/>
            <person name="Cronin A."/>
            <person name="Davis P."/>
            <person name="Goodhead I."/>
            <person name="Holroyd N."/>
            <person name="Jagels K."/>
            <person name="Lord A."/>
            <person name="Moule S."/>
            <person name="Mungall K."/>
            <person name="Norbertczak H."/>
            <person name="Quail M.A."/>
            <person name="Rabbinowitsch E."/>
            <person name="Walker D."/>
            <person name="White B."/>
            <person name="Whitehead S."/>
            <person name="Small P.L."/>
            <person name="Brosch R."/>
            <person name="Ramakrishnan L."/>
            <person name="Fischbach M.A."/>
            <person name="Parkhill J."/>
            <person name="Cole S.T."/>
        </authorList>
    </citation>
    <scope>NUCLEOTIDE SEQUENCE [LARGE SCALE GENOMIC DNA]</scope>
    <source>
        <strain>ATCC BAA-535 / M</strain>
    </source>
</reference>
<dbReference type="EC" id="6.3.2.8" evidence="1"/>
<dbReference type="EMBL" id="CP000854">
    <property type="protein sequence ID" value="ACC41618.1"/>
    <property type="molecule type" value="Genomic_DNA"/>
</dbReference>
<dbReference type="RefSeq" id="WP_012394858.1">
    <property type="nucleotide sequence ID" value="NC_010612.1"/>
</dbReference>
<dbReference type="SMR" id="B2HGR5"/>
<dbReference type="STRING" id="216594.MMAR_3192"/>
<dbReference type="KEGG" id="mmi:MMAR_3192"/>
<dbReference type="eggNOG" id="COG0773">
    <property type="taxonomic scope" value="Bacteria"/>
</dbReference>
<dbReference type="HOGENOM" id="CLU_028104_2_2_11"/>
<dbReference type="OrthoDB" id="9804126at2"/>
<dbReference type="UniPathway" id="UPA00219"/>
<dbReference type="Proteomes" id="UP000001190">
    <property type="component" value="Chromosome"/>
</dbReference>
<dbReference type="GO" id="GO:0005737">
    <property type="term" value="C:cytoplasm"/>
    <property type="evidence" value="ECO:0007669"/>
    <property type="project" value="UniProtKB-SubCell"/>
</dbReference>
<dbReference type="GO" id="GO:0005524">
    <property type="term" value="F:ATP binding"/>
    <property type="evidence" value="ECO:0007669"/>
    <property type="project" value="UniProtKB-UniRule"/>
</dbReference>
<dbReference type="GO" id="GO:0008763">
    <property type="term" value="F:UDP-N-acetylmuramate-L-alanine ligase activity"/>
    <property type="evidence" value="ECO:0007669"/>
    <property type="project" value="UniProtKB-UniRule"/>
</dbReference>
<dbReference type="GO" id="GO:0051301">
    <property type="term" value="P:cell division"/>
    <property type="evidence" value="ECO:0007669"/>
    <property type="project" value="UniProtKB-KW"/>
</dbReference>
<dbReference type="GO" id="GO:0071555">
    <property type="term" value="P:cell wall organization"/>
    <property type="evidence" value="ECO:0007669"/>
    <property type="project" value="UniProtKB-KW"/>
</dbReference>
<dbReference type="GO" id="GO:0009252">
    <property type="term" value="P:peptidoglycan biosynthetic process"/>
    <property type="evidence" value="ECO:0007669"/>
    <property type="project" value="UniProtKB-UniRule"/>
</dbReference>
<dbReference type="GO" id="GO:0008360">
    <property type="term" value="P:regulation of cell shape"/>
    <property type="evidence" value="ECO:0007669"/>
    <property type="project" value="UniProtKB-KW"/>
</dbReference>
<dbReference type="FunFam" id="3.40.50.720:FF:000046">
    <property type="entry name" value="UDP-N-acetylmuramate--L-alanine ligase"/>
    <property type="match status" value="1"/>
</dbReference>
<dbReference type="Gene3D" id="3.90.190.20">
    <property type="entry name" value="Mur ligase, C-terminal domain"/>
    <property type="match status" value="1"/>
</dbReference>
<dbReference type="Gene3D" id="3.40.1190.10">
    <property type="entry name" value="Mur-like, catalytic domain"/>
    <property type="match status" value="1"/>
</dbReference>
<dbReference type="Gene3D" id="3.40.50.720">
    <property type="entry name" value="NAD(P)-binding Rossmann-like Domain"/>
    <property type="match status" value="1"/>
</dbReference>
<dbReference type="HAMAP" id="MF_00046">
    <property type="entry name" value="MurC"/>
    <property type="match status" value="1"/>
</dbReference>
<dbReference type="InterPro" id="IPR036565">
    <property type="entry name" value="Mur-like_cat_sf"/>
</dbReference>
<dbReference type="InterPro" id="IPR004101">
    <property type="entry name" value="Mur_ligase_C"/>
</dbReference>
<dbReference type="InterPro" id="IPR036615">
    <property type="entry name" value="Mur_ligase_C_dom_sf"/>
</dbReference>
<dbReference type="InterPro" id="IPR013221">
    <property type="entry name" value="Mur_ligase_cen"/>
</dbReference>
<dbReference type="InterPro" id="IPR000713">
    <property type="entry name" value="Mur_ligase_N"/>
</dbReference>
<dbReference type="InterPro" id="IPR050061">
    <property type="entry name" value="MurCDEF_pg_biosynth"/>
</dbReference>
<dbReference type="InterPro" id="IPR005758">
    <property type="entry name" value="UDP-N-AcMur_Ala_ligase_MurC"/>
</dbReference>
<dbReference type="NCBIfam" id="TIGR01082">
    <property type="entry name" value="murC"/>
    <property type="match status" value="1"/>
</dbReference>
<dbReference type="PANTHER" id="PTHR43445:SF3">
    <property type="entry name" value="UDP-N-ACETYLMURAMATE--L-ALANINE LIGASE"/>
    <property type="match status" value="1"/>
</dbReference>
<dbReference type="PANTHER" id="PTHR43445">
    <property type="entry name" value="UDP-N-ACETYLMURAMATE--L-ALANINE LIGASE-RELATED"/>
    <property type="match status" value="1"/>
</dbReference>
<dbReference type="Pfam" id="PF01225">
    <property type="entry name" value="Mur_ligase"/>
    <property type="match status" value="1"/>
</dbReference>
<dbReference type="Pfam" id="PF02875">
    <property type="entry name" value="Mur_ligase_C"/>
    <property type="match status" value="1"/>
</dbReference>
<dbReference type="Pfam" id="PF08245">
    <property type="entry name" value="Mur_ligase_M"/>
    <property type="match status" value="1"/>
</dbReference>
<dbReference type="SUPFAM" id="SSF51984">
    <property type="entry name" value="MurCD N-terminal domain"/>
    <property type="match status" value="1"/>
</dbReference>
<dbReference type="SUPFAM" id="SSF53623">
    <property type="entry name" value="MurD-like peptide ligases, catalytic domain"/>
    <property type="match status" value="1"/>
</dbReference>
<dbReference type="SUPFAM" id="SSF53244">
    <property type="entry name" value="MurD-like peptide ligases, peptide-binding domain"/>
    <property type="match status" value="1"/>
</dbReference>
<keyword id="KW-0067">ATP-binding</keyword>
<keyword id="KW-0131">Cell cycle</keyword>
<keyword id="KW-0132">Cell division</keyword>
<keyword id="KW-0133">Cell shape</keyword>
<keyword id="KW-0961">Cell wall biogenesis/degradation</keyword>
<keyword id="KW-0963">Cytoplasm</keyword>
<keyword id="KW-0436">Ligase</keyword>
<keyword id="KW-0547">Nucleotide-binding</keyword>
<keyword id="KW-0573">Peptidoglycan synthesis</keyword>
<keyword id="KW-1185">Reference proteome</keyword>
<organism>
    <name type="scientific">Mycobacterium marinum (strain ATCC BAA-535 / M)</name>
    <dbReference type="NCBI Taxonomy" id="216594"/>
    <lineage>
        <taxon>Bacteria</taxon>
        <taxon>Bacillati</taxon>
        <taxon>Actinomycetota</taxon>
        <taxon>Actinomycetes</taxon>
        <taxon>Mycobacteriales</taxon>
        <taxon>Mycobacteriaceae</taxon>
        <taxon>Mycobacterium</taxon>
        <taxon>Mycobacterium ulcerans group</taxon>
    </lineage>
</organism>
<name>MURC_MYCMM</name>
<accession>B2HGR5</accession>
<proteinExistence type="inferred from homology"/>
<evidence type="ECO:0000255" key="1">
    <source>
        <dbReference type="HAMAP-Rule" id="MF_00046"/>
    </source>
</evidence>
<gene>
    <name evidence="1" type="primary">murC</name>
    <name type="ordered locus">MMAR_3192</name>
</gene>
<protein>
    <recommendedName>
        <fullName evidence="1">UDP-N-acetylmuramate--L-alanine ligase</fullName>
        <ecNumber evidence="1">6.3.2.8</ecNumber>
    </recommendedName>
    <alternativeName>
        <fullName evidence="1">UDP-N-acetylmuramoyl-L-alanine synthetase</fullName>
    </alternativeName>
</protein>
<feature type="chain" id="PRO_1000091118" description="UDP-N-acetylmuramate--L-alanine ligase">
    <location>
        <begin position="1"/>
        <end position="488"/>
    </location>
</feature>
<feature type="binding site" evidence="1">
    <location>
        <begin position="122"/>
        <end position="128"/>
    </location>
    <ligand>
        <name>ATP</name>
        <dbReference type="ChEBI" id="CHEBI:30616"/>
    </ligand>
</feature>
<sequence>MTAEQLPPELQRVHMVGIGGAGMSGIARILLDRGGLVSGSDAKESRGVHALRARGALIRIGHDASALDLLPGGVTSVITTHAAIPKTNPELVEASRRGIPVMLRPLVLAKLMDGRTTVMVTGTHGKTTTTSMVIVALQHCGRDPSFAVGGELGEAGTNAHHGSGDYFVAEADESDGSLLEYTPHVAVVTNIEADHLDFYGSTEAYVGVFDAFVERLAPGGALVVCADDPGSAALAERSAELGIRVLRYGSAGHAEAALAATLVSWEQRGTGAVAQIQLAGEADPRSMRLSVPGRHMALNALGALLAAIEVGAPVGEVLDGLAGFEGVRRRFELVGTAESVRVFDDYAHHPTEVRATLEAVRSVVRQSGSGRLLVVFQPHLYSRTKAFAAEFGSALDAADEVFVLDVYAAREQPLTGISGASVAEHVTVPVRYLRDFSAVAEVVAAAAGPGDVVVTMGAGDVTLLGPEIVAALRMRADRSEPGRPGVLQ</sequence>
<comment type="function">
    <text evidence="1">Cell wall formation.</text>
</comment>
<comment type="catalytic activity">
    <reaction evidence="1">
        <text>UDP-N-acetyl-alpha-D-muramate + L-alanine + ATP = UDP-N-acetyl-alpha-D-muramoyl-L-alanine + ADP + phosphate + H(+)</text>
        <dbReference type="Rhea" id="RHEA:23372"/>
        <dbReference type="ChEBI" id="CHEBI:15378"/>
        <dbReference type="ChEBI" id="CHEBI:30616"/>
        <dbReference type="ChEBI" id="CHEBI:43474"/>
        <dbReference type="ChEBI" id="CHEBI:57972"/>
        <dbReference type="ChEBI" id="CHEBI:70757"/>
        <dbReference type="ChEBI" id="CHEBI:83898"/>
        <dbReference type="ChEBI" id="CHEBI:456216"/>
        <dbReference type="EC" id="6.3.2.8"/>
    </reaction>
</comment>
<comment type="pathway">
    <text evidence="1">Cell wall biogenesis; peptidoglycan biosynthesis.</text>
</comment>
<comment type="subcellular location">
    <subcellularLocation>
        <location evidence="1">Cytoplasm</location>
    </subcellularLocation>
</comment>
<comment type="similarity">
    <text evidence="1">Belongs to the MurCDEF family.</text>
</comment>